<proteinExistence type="inferred from homology"/>
<keyword id="KW-0004">4Fe-4S</keyword>
<keyword id="KW-0013">ADP-ribosylation</keyword>
<keyword id="KW-0067">ATP-binding</keyword>
<keyword id="KW-0408">Iron</keyword>
<keyword id="KW-0411">Iron-sulfur</keyword>
<keyword id="KW-0479">Metal-binding</keyword>
<keyword id="KW-0535">Nitrogen fixation</keyword>
<keyword id="KW-0547">Nucleotide-binding</keyword>
<keyword id="KW-0560">Oxidoreductase</keyword>
<protein>
    <recommendedName>
        <fullName>Nitrogenase iron protein 1</fullName>
        <ecNumber>1.18.6.1</ecNumber>
    </recommendedName>
    <alternativeName>
        <fullName>Nitrogenase Fe protein 1</fullName>
    </alternativeName>
    <alternativeName>
        <fullName>Nitrogenase component II</fullName>
    </alternativeName>
    <alternativeName>
        <fullName>Nitrogenase reductase</fullName>
    </alternativeName>
</protein>
<dbReference type="EC" id="1.18.6.1"/>
<dbReference type="EMBL" id="U89346">
    <property type="protein sequence ID" value="AAC45588.1"/>
    <property type="molecule type" value="Genomic_DNA"/>
</dbReference>
<dbReference type="EMBL" id="CP000117">
    <property type="protein sequence ID" value="ABA23521.1"/>
    <property type="molecule type" value="Genomic_DNA"/>
</dbReference>
<dbReference type="SMR" id="P0A3S1"/>
<dbReference type="STRING" id="240292.Ava_3916"/>
<dbReference type="KEGG" id="ava:Ava_3916"/>
<dbReference type="eggNOG" id="COG1348">
    <property type="taxonomic scope" value="Bacteria"/>
</dbReference>
<dbReference type="HOGENOM" id="CLU_059373_0_0_3"/>
<dbReference type="Proteomes" id="UP000002533">
    <property type="component" value="Chromosome"/>
</dbReference>
<dbReference type="GO" id="GO:0051539">
    <property type="term" value="F:4 iron, 4 sulfur cluster binding"/>
    <property type="evidence" value="ECO:0007669"/>
    <property type="project" value="UniProtKB-KW"/>
</dbReference>
<dbReference type="GO" id="GO:0005524">
    <property type="term" value="F:ATP binding"/>
    <property type="evidence" value="ECO:0007669"/>
    <property type="project" value="UniProtKB-UniRule"/>
</dbReference>
<dbReference type="GO" id="GO:0046872">
    <property type="term" value="F:metal ion binding"/>
    <property type="evidence" value="ECO:0007669"/>
    <property type="project" value="UniProtKB-KW"/>
</dbReference>
<dbReference type="GO" id="GO:0016163">
    <property type="term" value="F:nitrogenase activity"/>
    <property type="evidence" value="ECO:0007669"/>
    <property type="project" value="UniProtKB-UniRule"/>
</dbReference>
<dbReference type="GO" id="GO:0009399">
    <property type="term" value="P:nitrogen fixation"/>
    <property type="evidence" value="ECO:0007669"/>
    <property type="project" value="UniProtKB-UniRule"/>
</dbReference>
<dbReference type="CDD" id="cd02040">
    <property type="entry name" value="NifH"/>
    <property type="match status" value="1"/>
</dbReference>
<dbReference type="FunFam" id="3.40.50.300:FF:001379">
    <property type="entry name" value="Nitrogenase iron protein 1"/>
    <property type="match status" value="1"/>
</dbReference>
<dbReference type="Gene3D" id="3.40.50.300">
    <property type="entry name" value="P-loop containing nucleotide triphosphate hydrolases"/>
    <property type="match status" value="1"/>
</dbReference>
<dbReference type="HAMAP" id="MF_00533">
    <property type="entry name" value="NifH"/>
    <property type="match status" value="1"/>
</dbReference>
<dbReference type="InterPro" id="IPR030655">
    <property type="entry name" value="NifH/chlL_CS"/>
</dbReference>
<dbReference type="InterPro" id="IPR000392">
    <property type="entry name" value="NifH/frxC"/>
</dbReference>
<dbReference type="InterPro" id="IPR005977">
    <property type="entry name" value="Nitrogenase_Fe_NifH"/>
</dbReference>
<dbReference type="InterPro" id="IPR027417">
    <property type="entry name" value="P-loop_NTPase"/>
</dbReference>
<dbReference type="NCBIfam" id="TIGR01287">
    <property type="entry name" value="nifH"/>
    <property type="match status" value="1"/>
</dbReference>
<dbReference type="PANTHER" id="PTHR42864">
    <property type="entry name" value="LIGHT-INDEPENDENT PROTOCHLOROPHYLLIDE REDUCTASE IRON-SULFUR ATP-BINDING PROTEIN"/>
    <property type="match status" value="1"/>
</dbReference>
<dbReference type="PANTHER" id="PTHR42864:SF2">
    <property type="entry name" value="LIGHT-INDEPENDENT PROTOCHLOROPHYLLIDE REDUCTASE IRON-SULFUR ATP-BINDING PROTEIN"/>
    <property type="match status" value="1"/>
</dbReference>
<dbReference type="Pfam" id="PF00142">
    <property type="entry name" value="Fer4_NifH"/>
    <property type="match status" value="1"/>
</dbReference>
<dbReference type="PIRSF" id="PIRSF000363">
    <property type="entry name" value="Nitrogenase_iron"/>
    <property type="match status" value="1"/>
</dbReference>
<dbReference type="PRINTS" id="PR00091">
    <property type="entry name" value="NITROGNASEII"/>
</dbReference>
<dbReference type="SUPFAM" id="SSF52540">
    <property type="entry name" value="P-loop containing nucleoside triphosphate hydrolases"/>
    <property type="match status" value="1"/>
</dbReference>
<dbReference type="PROSITE" id="PS00746">
    <property type="entry name" value="NIFH_FRXC_1"/>
    <property type="match status" value="1"/>
</dbReference>
<dbReference type="PROSITE" id="PS00692">
    <property type="entry name" value="NIFH_FRXC_2"/>
    <property type="match status" value="1"/>
</dbReference>
<dbReference type="PROSITE" id="PS51026">
    <property type="entry name" value="NIFH_FRXC_3"/>
    <property type="match status" value="1"/>
</dbReference>
<comment type="function">
    <text evidence="1">The key enzymatic reactions in nitrogen fixation are catalyzed by the nitrogenase complex, which has 2 components: the iron protein and the molybdenum-iron protein.</text>
</comment>
<comment type="catalytic activity">
    <reaction>
        <text>N2 + 8 reduced [2Fe-2S]-[ferredoxin] + 16 ATP + 16 H2O = H2 + 8 oxidized [2Fe-2S]-[ferredoxin] + 2 NH4(+) + 16 ADP + 16 phosphate + 6 H(+)</text>
        <dbReference type="Rhea" id="RHEA:21448"/>
        <dbReference type="Rhea" id="RHEA-COMP:10000"/>
        <dbReference type="Rhea" id="RHEA-COMP:10001"/>
        <dbReference type="ChEBI" id="CHEBI:15377"/>
        <dbReference type="ChEBI" id="CHEBI:15378"/>
        <dbReference type="ChEBI" id="CHEBI:17997"/>
        <dbReference type="ChEBI" id="CHEBI:18276"/>
        <dbReference type="ChEBI" id="CHEBI:28938"/>
        <dbReference type="ChEBI" id="CHEBI:30616"/>
        <dbReference type="ChEBI" id="CHEBI:33737"/>
        <dbReference type="ChEBI" id="CHEBI:33738"/>
        <dbReference type="ChEBI" id="CHEBI:43474"/>
        <dbReference type="ChEBI" id="CHEBI:456216"/>
        <dbReference type="EC" id="1.18.6.1"/>
    </reaction>
</comment>
<comment type="cofactor">
    <cofactor evidence="1">
        <name>[4Fe-4S] cluster</name>
        <dbReference type="ChEBI" id="CHEBI:49883"/>
    </cofactor>
    <text evidence="1">Binds 1 [4Fe-4S] cluster per dimer.</text>
</comment>
<comment type="subunit">
    <text evidence="1">Homodimer.</text>
</comment>
<comment type="PTM">
    <text evidence="1">The reversible ADP-ribosylation of Arg-104 inactivates the nitrogenase reductase and regulates nitrogenase activity.</text>
</comment>
<comment type="similarity">
    <text evidence="3">Belongs to the NifH/BchL/ChlL family.</text>
</comment>
<organism>
    <name type="scientific">Trichormus variabilis (strain ATCC 29413 / PCC 7937)</name>
    <name type="common">Anabaena variabilis</name>
    <dbReference type="NCBI Taxonomy" id="240292"/>
    <lineage>
        <taxon>Bacteria</taxon>
        <taxon>Bacillati</taxon>
        <taxon>Cyanobacteriota</taxon>
        <taxon>Cyanophyceae</taxon>
        <taxon>Nostocales</taxon>
        <taxon>Nostocaceae</taxon>
        <taxon>Trichormus</taxon>
    </lineage>
</organism>
<accession>P0A3S1</accession>
<accession>O08050</accession>
<accession>Q3M665</accession>
<accession>Q43886</accession>
<feature type="chain" id="PRO_0000139483" description="Nitrogenase iron protein 1">
    <location>
        <begin position="1"/>
        <end position="295"/>
    </location>
</feature>
<feature type="binding site" evidence="2">
    <location>
        <begin position="13"/>
        <end position="20"/>
    </location>
    <ligand>
        <name>ATP</name>
        <dbReference type="ChEBI" id="CHEBI:30616"/>
    </ligand>
</feature>
<feature type="binding site" evidence="1">
    <location>
        <position position="101"/>
    </location>
    <ligand>
        <name>[4Fe-4S] cluster</name>
        <dbReference type="ChEBI" id="CHEBI:49883"/>
        <note>ligand shared between dimeric partners</note>
    </ligand>
</feature>
<feature type="binding site" evidence="1">
    <location>
        <position position="135"/>
    </location>
    <ligand>
        <name>[4Fe-4S] cluster</name>
        <dbReference type="ChEBI" id="CHEBI:49883"/>
        <note>ligand shared between dimeric partners</note>
    </ligand>
</feature>
<feature type="modified residue" description="ADP-ribosylarginine; by dinitrogenase reductase ADP-ribosyltransferase" evidence="1">
    <location>
        <position position="104"/>
    </location>
</feature>
<name>NIFH1_TRIV2</name>
<gene>
    <name type="primary">nifH1</name>
    <name type="synonym">nifH</name>
    <name type="ordered locus">Ava_3916</name>
</gene>
<sequence>MTDENIRQIAFYGKGGIGKSTTSQNTLAAMAEMGQRIMIVGCDPKADSTRLMLHAKAQTTVLHLAAERGAVEDLELHEVMLTGFRGVRCVESGGPEPGVGCAGRGIITAINFLEENGAYQDLDFVSYDVLGDVVCGGFAMPIREGKAQEIYIVTSGEMMAMYAANNIARGILKYAHSGGVRLGGLICNSRKTDREAELIENLAERLNTQMIHFVPRDNIVQHAELRRMTVNEYAPDSNQGQEYRALAKKIINNDKLTIPTPIEMDELEALLIEYGILDDDSKHAEIIGKPAEATK</sequence>
<reference key="1">
    <citation type="journal article" date="1997" name="J. Bacteriol.">
        <title>Characterization of genes for a second Mo-dependent nitrogenase in the cyanobacterium Anabaena variabilis.</title>
        <authorList>
            <person name="Thiel T."/>
            <person name="Lyons E.M."/>
            <person name="Erker J.C."/>
        </authorList>
    </citation>
    <scope>NUCLEOTIDE SEQUENCE [GENOMIC DNA]</scope>
</reference>
<reference key="2">
    <citation type="journal article" date="2014" name="Stand. Genomic Sci.">
        <title>Complete genome sequence of Anabaena variabilis ATCC 29413.</title>
        <authorList>
            <person name="Thiel T."/>
            <person name="Pratte B.S."/>
            <person name="Zhong J."/>
            <person name="Goodwin L."/>
            <person name="Copeland A."/>
            <person name="Lucas S."/>
            <person name="Han C."/>
            <person name="Pitluck S."/>
            <person name="Land M.L."/>
            <person name="Kyrpides N.C."/>
            <person name="Woyke T."/>
        </authorList>
    </citation>
    <scope>NUCLEOTIDE SEQUENCE [LARGE SCALE GENOMIC DNA]</scope>
    <source>
        <strain>ATCC 29413 / PCC 7937</strain>
    </source>
</reference>
<evidence type="ECO:0000250" key="1"/>
<evidence type="ECO:0000255" key="2"/>
<evidence type="ECO:0000305" key="3"/>